<gene>
    <name evidence="1" type="primary">glyQ</name>
    <name type="ordered locus">PA0009</name>
</gene>
<reference key="1">
    <citation type="journal article" date="2000" name="Nature">
        <title>Complete genome sequence of Pseudomonas aeruginosa PAO1, an opportunistic pathogen.</title>
        <authorList>
            <person name="Stover C.K."/>
            <person name="Pham X.-Q.T."/>
            <person name="Erwin A.L."/>
            <person name="Mizoguchi S.D."/>
            <person name="Warrener P."/>
            <person name="Hickey M.J."/>
            <person name="Brinkman F.S.L."/>
            <person name="Hufnagle W.O."/>
            <person name="Kowalik D.J."/>
            <person name="Lagrou M."/>
            <person name="Garber R.L."/>
            <person name="Goltry L."/>
            <person name="Tolentino E."/>
            <person name="Westbrock-Wadman S."/>
            <person name="Yuan Y."/>
            <person name="Brody L.L."/>
            <person name="Coulter S.N."/>
            <person name="Folger K.R."/>
            <person name="Kas A."/>
            <person name="Larbig K."/>
            <person name="Lim R.M."/>
            <person name="Smith K.A."/>
            <person name="Spencer D.H."/>
            <person name="Wong G.K.-S."/>
            <person name="Wu Z."/>
            <person name="Paulsen I.T."/>
            <person name="Reizer J."/>
            <person name="Saier M.H. Jr."/>
            <person name="Hancock R.E.W."/>
            <person name="Lory S."/>
            <person name="Olson M.V."/>
        </authorList>
    </citation>
    <scope>NUCLEOTIDE SEQUENCE [LARGE SCALE GENOMIC DNA]</scope>
    <source>
        <strain>ATCC 15692 / DSM 22644 / CIP 104116 / JCM 14847 / LMG 12228 / 1C / PRS 101 / PAO1</strain>
    </source>
</reference>
<evidence type="ECO:0000255" key="1">
    <source>
        <dbReference type="HAMAP-Rule" id="MF_00254"/>
    </source>
</evidence>
<proteinExistence type="inferred from homology"/>
<accession>Q9I7B7</accession>
<dbReference type="EC" id="6.1.1.14" evidence="1"/>
<dbReference type="EMBL" id="AE004091">
    <property type="protein sequence ID" value="AAG03399.1"/>
    <property type="molecule type" value="Genomic_DNA"/>
</dbReference>
<dbReference type="PIR" id="E83645">
    <property type="entry name" value="E83645"/>
</dbReference>
<dbReference type="RefSeq" id="NP_064729.1">
    <property type="nucleotide sequence ID" value="NC_002516.2"/>
</dbReference>
<dbReference type="RefSeq" id="WP_003097276.1">
    <property type="nucleotide sequence ID" value="NZ_QZGE01000012.1"/>
</dbReference>
<dbReference type="SMR" id="Q9I7B7"/>
<dbReference type="FunCoup" id="Q9I7B7">
    <property type="interactions" value="469"/>
</dbReference>
<dbReference type="STRING" id="208964.PA0009"/>
<dbReference type="PaxDb" id="208964-PA0009"/>
<dbReference type="GeneID" id="878095"/>
<dbReference type="KEGG" id="pae:PA0009"/>
<dbReference type="PATRIC" id="fig|208964.12.peg.9"/>
<dbReference type="PseudoCAP" id="PA0009"/>
<dbReference type="HOGENOM" id="CLU_057066_1_0_6"/>
<dbReference type="InParanoid" id="Q9I7B7"/>
<dbReference type="OrthoDB" id="9802183at2"/>
<dbReference type="PhylomeDB" id="Q9I7B7"/>
<dbReference type="BioCyc" id="PAER208964:G1FZ6-9-MONOMER"/>
<dbReference type="Proteomes" id="UP000002438">
    <property type="component" value="Chromosome"/>
</dbReference>
<dbReference type="GO" id="GO:0005737">
    <property type="term" value="C:cytoplasm"/>
    <property type="evidence" value="ECO:0007669"/>
    <property type="project" value="UniProtKB-SubCell"/>
</dbReference>
<dbReference type="GO" id="GO:0005524">
    <property type="term" value="F:ATP binding"/>
    <property type="evidence" value="ECO:0007669"/>
    <property type="project" value="UniProtKB-UniRule"/>
</dbReference>
<dbReference type="GO" id="GO:0004820">
    <property type="term" value="F:glycine-tRNA ligase activity"/>
    <property type="evidence" value="ECO:0007669"/>
    <property type="project" value="UniProtKB-UniRule"/>
</dbReference>
<dbReference type="GO" id="GO:0006426">
    <property type="term" value="P:glycyl-tRNA aminoacylation"/>
    <property type="evidence" value="ECO:0007669"/>
    <property type="project" value="UniProtKB-UniRule"/>
</dbReference>
<dbReference type="CDD" id="cd00733">
    <property type="entry name" value="GlyRS_alpha_core"/>
    <property type="match status" value="1"/>
</dbReference>
<dbReference type="FunFam" id="3.30.930.10:FF:000006">
    <property type="entry name" value="Glycine--tRNA ligase alpha subunit"/>
    <property type="match status" value="1"/>
</dbReference>
<dbReference type="Gene3D" id="3.30.930.10">
    <property type="entry name" value="Bira Bifunctional Protein, Domain 2"/>
    <property type="match status" value="1"/>
</dbReference>
<dbReference type="Gene3D" id="1.20.58.180">
    <property type="entry name" value="Class II aaRS and biotin synthetases, domain 2"/>
    <property type="match status" value="1"/>
</dbReference>
<dbReference type="HAMAP" id="MF_00254">
    <property type="entry name" value="Gly_tRNA_synth_alpha"/>
    <property type="match status" value="1"/>
</dbReference>
<dbReference type="InterPro" id="IPR045864">
    <property type="entry name" value="aa-tRNA-synth_II/BPL/LPL"/>
</dbReference>
<dbReference type="InterPro" id="IPR006194">
    <property type="entry name" value="Gly-tRNA-synth_heterodimer"/>
</dbReference>
<dbReference type="InterPro" id="IPR002310">
    <property type="entry name" value="Gly-tRNA_ligase_asu"/>
</dbReference>
<dbReference type="NCBIfam" id="TIGR00388">
    <property type="entry name" value="glyQ"/>
    <property type="match status" value="1"/>
</dbReference>
<dbReference type="NCBIfam" id="NF006827">
    <property type="entry name" value="PRK09348.1"/>
    <property type="match status" value="1"/>
</dbReference>
<dbReference type="PANTHER" id="PTHR30075:SF2">
    <property type="entry name" value="GLYCINE--TRNA LIGASE, CHLOROPLASTIC_MITOCHONDRIAL 2"/>
    <property type="match status" value="1"/>
</dbReference>
<dbReference type="PANTHER" id="PTHR30075">
    <property type="entry name" value="GLYCYL-TRNA SYNTHETASE"/>
    <property type="match status" value="1"/>
</dbReference>
<dbReference type="Pfam" id="PF02091">
    <property type="entry name" value="tRNA-synt_2e"/>
    <property type="match status" value="1"/>
</dbReference>
<dbReference type="PRINTS" id="PR01044">
    <property type="entry name" value="TRNASYNTHGA"/>
</dbReference>
<dbReference type="SUPFAM" id="SSF55681">
    <property type="entry name" value="Class II aaRS and biotin synthetases"/>
    <property type="match status" value="1"/>
</dbReference>
<dbReference type="PROSITE" id="PS50861">
    <property type="entry name" value="AA_TRNA_LIGASE_II_GLYAB"/>
    <property type="match status" value="1"/>
</dbReference>
<protein>
    <recommendedName>
        <fullName evidence="1">Glycine--tRNA ligase alpha subunit</fullName>
        <ecNumber evidence="1">6.1.1.14</ecNumber>
    </recommendedName>
    <alternativeName>
        <fullName evidence="1">Glycyl-tRNA synthetase alpha subunit</fullName>
        <shortName evidence="1">GlyRS</shortName>
    </alternativeName>
</protein>
<feature type="chain" id="PRO_0000072854" description="Glycine--tRNA ligase alpha subunit">
    <location>
        <begin position="1"/>
        <end position="315"/>
    </location>
</feature>
<keyword id="KW-0030">Aminoacyl-tRNA synthetase</keyword>
<keyword id="KW-0067">ATP-binding</keyword>
<keyword id="KW-0963">Cytoplasm</keyword>
<keyword id="KW-0436">Ligase</keyword>
<keyword id="KW-0547">Nucleotide-binding</keyword>
<keyword id="KW-0648">Protein biosynthesis</keyword>
<keyword id="KW-1185">Reference proteome</keyword>
<organism>
    <name type="scientific">Pseudomonas aeruginosa (strain ATCC 15692 / DSM 22644 / CIP 104116 / JCM 14847 / LMG 12228 / 1C / PRS 101 / PAO1)</name>
    <dbReference type="NCBI Taxonomy" id="208964"/>
    <lineage>
        <taxon>Bacteria</taxon>
        <taxon>Pseudomonadati</taxon>
        <taxon>Pseudomonadota</taxon>
        <taxon>Gammaproteobacteria</taxon>
        <taxon>Pseudomonadales</taxon>
        <taxon>Pseudomonadaceae</taxon>
        <taxon>Pseudomonas</taxon>
    </lineage>
</organism>
<sequence>MSQTTPAVRTFQDLILALQNYWAEQGCVVLQPYDMEVGAGTFHTATFLRAIGPETWNAAYVQPSRRPTDGRYGENPNRLQHYYQFQVVLKPNPENFQELYLGSLKAIGIDPLVHDIRFVEDNWESPTLGAWGLGWEIWLNGMEVTQFTYFQQVGGIECYPVTGEITYGLERLAMYLQGVDSVYDLVWTDGPFGKVTYGDVFHQNEVEQSTFNFEHANVPKLFELFDFYESEANRLIALELPLPTYEMVLKASHTFNLLDARRAISVTERQRYILRVRTLARAVAQSYLQARARLGFPMATPELRDEVLAKLKEAE</sequence>
<name>SYGA_PSEAE</name>
<comment type="catalytic activity">
    <reaction evidence="1">
        <text>tRNA(Gly) + glycine + ATP = glycyl-tRNA(Gly) + AMP + diphosphate</text>
        <dbReference type="Rhea" id="RHEA:16013"/>
        <dbReference type="Rhea" id="RHEA-COMP:9664"/>
        <dbReference type="Rhea" id="RHEA-COMP:9683"/>
        <dbReference type="ChEBI" id="CHEBI:30616"/>
        <dbReference type="ChEBI" id="CHEBI:33019"/>
        <dbReference type="ChEBI" id="CHEBI:57305"/>
        <dbReference type="ChEBI" id="CHEBI:78442"/>
        <dbReference type="ChEBI" id="CHEBI:78522"/>
        <dbReference type="ChEBI" id="CHEBI:456215"/>
        <dbReference type="EC" id="6.1.1.14"/>
    </reaction>
</comment>
<comment type="subunit">
    <text evidence="1">Tetramer of two alpha and two beta subunits.</text>
</comment>
<comment type="subcellular location">
    <subcellularLocation>
        <location evidence="1">Cytoplasm</location>
    </subcellularLocation>
</comment>
<comment type="similarity">
    <text evidence="1">Belongs to the class-II aminoacyl-tRNA synthetase family.</text>
</comment>